<proteinExistence type="inferred from homology"/>
<gene>
    <name type="ordered locus">RC0098</name>
</gene>
<dbReference type="EMBL" id="AE006914">
    <property type="protein sequence ID" value="AAL02636.1"/>
    <property type="molecule type" value="Genomic_DNA"/>
</dbReference>
<dbReference type="PIR" id="B97712">
    <property type="entry name" value="B97712"/>
</dbReference>
<dbReference type="RefSeq" id="WP_010976782.1">
    <property type="nucleotide sequence ID" value="NC_003103.1"/>
</dbReference>
<dbReference type="GeneID" id="928100"/>
<dbReference type="KEGG" id="rco:RC0098"/>
<dbReference type="PATRIC" id="fig|272944.4.peg.117"/>
<dbReference type="HOGENOM" id="CLU_628327_0_0_5"/>
<dbReference type="Proteomes" id="UP000000816">
    <property type="component" value="Chromosome"/>
</dbReference>
<dbReference type="GO" id="GO:0016020">
    <property type="term" value="C:membrane"/>
    <property type="evidence" value="ECO:0007669"/>
    <property type="project" value="InterPro"/>
</dbReference>
<dbReference type="GO" id="GO:0015288">
    <property type="term" value="F:porin activity"/>
    <property type="evidence" value="ECO:0007669"/>
    <property type="project" value="InterPro"/>
</dbReference>
<dbReference type="Gene3D" id="2.40.160.10">
    <property type="entry name" value="Porin"/>
    <property type="match status" value="1"/>
</dbReference>
<dbReference type="InterPro" id="IPR033900">
    <property type="entry name" value="Gram_neg_porin_domain"/>
</dbReference>
<dbReference type="InterPro" id="IPR023614">
    <property type="entry name" value="Porin_dom_sf"/>
</dbReference>
<dbReference type="Pfam" id="PF13609">
    <property type="entry name" value="Porin_4"/>
    <property type="match status" value="1"/>
</dbReference>
<dbReference type="SUPFAM" id="SSF56935">
    <property type="entry name" value="Porins"/>
    <property type="match status" value="1"/>
</dbReference>
<sequence length="438" mass="47966">MKKLLLAASIICLASAGLAEENPTPVISNSDTEIKLEGFYLFENGYVKQDHLILFDKNVTDNRKKLGFYTEAAFAATIAKTINDVIAGAKIVLQPTTRAKTSTNYNGSHIFIETSYGKVELGSPADASAKLRITGSQVTAGTGGWSRYALLDGQYMRYNGLKSDFDTNASFYLESYSNSFDQINDKAERARRLNFFTPKMKGFQAGVSYTPDTANTGGNRDINNLTLASSGRNGVSVSKTGIKTVKLENNETMTINQNIRDAFSAGLTYEHEISEDADLKLSVTGEYGKPARRLIHAKMDGTTIQVLNTYKLSNLKAYNLGAVFTYGNFSCGASYGNLGKSLTAKEYYKVGRDTYYYNGAVAYGQGPIKTSLEYLKTSRYKNTVDAVSLATEYKIMPGLLPYAEISHFQAKGKPVYYPEAPSKTTRGTVGLIGTKLKF</sequence>
<accession>Q92JG9</accession>
<keyword id="KW-0732">Signal</keyword>
<organism>
    <name type="scientific">Rickettsia conorii (strain ATCC VR-613 / Malish 7)</name>
    <dbReference type="NCBI Taxonomy" id="272944"/>
    <lineage>
        <taxon>Bacteria</taxon>
        <taxon>Pseudomonadati</taxon>
        <taxon>Pseudomonadota</taxon>
        <taxon>Alphaproteobacteria</taxon>
        <taxon>Rickettsiales</taxon>
        <taxon>Rickettsiaceae</taxon>
        <taxon>Rickettsieae</taxon>
        <taxon>Rickettsia</taxon>
        <taxon>spotted fever group</taxon>
    </lineage>
</organism>
<protein>
    <recommendedName>
        <fullName>Uncharacterized protein RC0098</fullName>
    </recommendedName>
</protein>
<evidence type="ECO:0000255" key="1"/>
<feature type="signal peptide" evidence="1">
    <location>
        <begin position="1"/>
        <end position="19"/>
    </location>
</feature>
<feature type="chain" id="PRO_0000260169" description="Uncharacterized protein RC0098">
    <location>
        <begin position="20"/>
        <end position="438"/>
    </location>
</feature>
<reference key="1">
    <citation type="journal article" date="2001" name="Science">
        <title>Mechanisms of evolution in Rickettsia conorii and R. prowazekii.</title>
        <authorList>
            <person name="Ogata H."/>
            <person name="Audic S."/>
            <person name="Renesto-Audiffren P."/>
            <person name="Fournier P.-E."/>
            <person name="Barbe V."/>
            <person name="Samson D."/>
            <person name="Roux V."/>
            <person name="Cossart P."/>
            <person name="Weissenbach J."/>
            <person name="Claverie J.-M."/>
            <person name="Raoult D."/>
        </authorList>
    </citation>
    <scope>NUCLEOTIDE SEQUENCE [LARGE SCALE GENOMIC DNA]</scope>
    <source>
        <strain>ATCC VR-613 / Malish 7</strain>
    </source>
</reference>
<name>Y098_RICCN</name>